<dbReference type="EC" id="2.7.1.130" evidence="1"/>
<dbReference type="EMBL" id="CP000847">
    <property type="protein sequence ID" value="ABV75350.1"/>
    <property type="molecule type" value="Genomic_DNA"/>
</dbReference>
<dbReference type="RefSeq" id="WP_012149980.1">
    <property type="nucleotide sequence ID" value="NC_009881.1"/>
</dbReference>
<dbReference type="SMR" id="A8GPM5"/>
<dbReference type="STRING" id="293614.A1C_05575"/>
<dbReference type="KEGG" id="rak:A1C_05575"/>
<dbReference type="eggNOG" id="COG1663">
    <property type="taxonomic scope" value="Bacteria"/>
</dbReference>
<dbReference type="HOGENOM" id="CLU_038816_0_0_5"/>
<dbReference type="UniPathway" id="UPA00359">
    <property type="reaction ID" value="UER00482"/>
</dbReference>
<dbReference type="Proteomes" id="UP000006830">
    <property type="component" value="Chromosome"/>
</dbReference>
<dbReference type="GO" id="GO:0005886">
    <property type="term" value="C:plasma membrane"/>
    <property type="evidence" value="ECO:0007669"/>
    <property type="project" value="TreeGrafter"/>
</dbReference>
<dbReference type="GO" id="GO:0005524">
    <property type="term" value="F:ATP binding"/>
    <property type="evidence" value="ECO:0007669"/>
    <property type="project" value="UniProtKB-UniRule"/>
</dbReference>
<dbReference type="GO" id="GO:0009029">
    <property type="term" value="F:tetraacyldisaccharide 4'-kinase activity"/>
    <property type="evidence" value="ECO:0007669"/>
    <property type="project" value="UniProtKB-UniRule"/>
</dbReference>
<dbReference type="GO" id="GO:0009245">
    <property type="term" value="P:lipid A biosynthetic process"/>
    <property type="evidence" value="ECO:0007669"/>
    <property type="project" value="UniProtKB-UniRule"/>
</dbReference>
<dbReference type="GO" id="GO:0009244">
    <property type="term" value="P:lipopolysaccharide core region biosynthetic process"/>
    <property type="evidence" value="ECO:0007669"/>
    <property type="project" value="TreeGrafter"/>
</dbReference>
<dbReference type="HAMAP" id="MF_00409">
    <property type="entry name" value="LpxK"/>
    <property type="match status" value="1"/>
</dbReference>
<dbReference type="InterPro" id="IPR003758">
    <property type="entry name" value="LpxK"/>
</dbReference>
<dbReference type="InterPro" id="IPR027417">
    <property type="entry name" value="P-loop_NTPase"/>
</dbReference>
<dbReference type="NCBIfam" id="TIGR00682">
    <property type="entry name" value="lpxK"/>
    <property type="match status" value="1"/>
</dbReference>
<dbReference type="PANTHER" id="PTHR42724">
    <property type="entry name" value="TETRAACYLDISACCHARIDE 4'-KINASE"/>
    <property type="match status" value="1"/>
</dbReference>
<dbReference type="PANTHER" id="PTHR42724:SF1">
    <property type="entry name" value="TETRAACYLDISACCHARIDE 4'-KINASE, MITOCHONDRIAL-RELATED"/>
    <property type="match status" value="1"/>
</dbReference>
<dbReference type="Pfam" id="PF02606">
    <property type="entry name" value="LpxK"/>
    <property type="match status" value="1"/>
</dbReference>
<dbReference type="SUPFAM" id="SSF52540">
    <property type="entry name" value="P-loop containing nucleoside triphosphate hydrolases"/>
    <property type="match status" value="1"/>
</dbReference>
<comment type="function">
    <text evidence="1">Transfers the gamma-phosphate of ATP to the 4'-position of a tetraacyldisaccharide 1-phosphate intermediate (termed DS-1-P) to form tetraacyldisaccharide 1,4'-bis-phosphate (lipid IVA).</text>
</comment>
<comment type="catalytic activity">
    <reaction evidence="1">
        <text>a lipid A disaccharide + ATP = a lipid IVA + ADP + H(+)</text>
        <dbReference type="Rhea" id="RHEA:67840"/>
        <dbReference type="ChEBI" id="CHEBI:15378"/>
        <dbReference type="ChEBI" id="CHEBI:30616"/>
        <dbReference type="ChEBI" id="CHEBI:176343"/>
        <dbReference type="ChEBI" id="CHEBI:176425"/>
        <dbReference type="ChEBI" id="CHEBI:456216"/>
        <dbReference type="EC" id="2.7.1.130"/>
    </reaction>
</comment>
<comment type="pathway">
    <text evidence="1">Glycolipid biosynthesis; lipid IV(A) biosynthesis; lipid IV(A) from (3R)-3-hydroxytetradecanoyl-[acyl-carrier-protein] and UDP-N-acetyl-alpha-D-glucosamine: step 6/6.</text>
</comment>
<comment type="similarity">
    <text evidence="1">Belongs to the LpxK family.</text>
</comment>
<organism>
    <name type="scientific">Rickettsia akari (strain Hartford)</name>
    <dbReference type="NCBI Taxonomy" id="293614"/>
    <lineage>
        <taxon>Bacteria</taxon>
        <taxon>Pseudomonadati</taxon>
        <taxon>Pseudomonadota</taxon>
        <taxon>Alphaproteobacteria</taxon>
        <taxon>Rickettsiales</taxon>
        <taxon>Rickettsiaceae</taxon>
        <taxon>Rickettsieae</taxon>
        <taxon>Rickettsia</taxon>
        <taxon>spotted fever group</taxon>
    </lineage>
</organism>
<evidence type="ECO:0000255" key="1">
    <source>
        <dbReference type="HAMAP-Rule" id="MF_00409"/>
    </source>
</evidence>
<name>LPXK_RICAH</name>
<keyword id="KW-0067">ATP-binding</keyword>
<keyword id="KW-0418">Kinase</keyword>
<keyword id="KW-0441">Lipid A biosynthesis</keyword>
<keyword id="KW-0444">Lipid biosynthesis</keyword>
<keyword id="KW-0443">Lipid metabolism</keyword>
<keyword id="KW-0547">Nucleotide-binding</keyword>
<keyword id="KW-0808">Transferase</keyword>
<reference key="1">
    <citation type="submission" date="2007-09" db="EMBL/GenBank/DDBJ databases">
        <title>Complete genome sequence of Rickettsia akari.</title>
        <authorList>
            <person name="Madan A."/>
            <person name="Fahey J."/>
            <person name="Helton E."/>
            <person name="Ketteman M."/>
            <person name="Madan A."/>
            <person name="Rodrigues S."/>
            <person name="Sanchez A."/>
            <person name="Whiting M."/>
            <person name="Dasch G."/>
            <person name="Eremeeva M."/>
        </authorList>
    </citation>
    <scope>NUCLEOTIDE SEQUENCE [LARGE SCALE GENOMIC DNA]</scope>
    <source>
        <strain>Hartford</strain>
    </source>
</reference>
<gene>
    <name evidence="1" type="primary">lpxK</name>
    <name type="ordered locus">A1C_05575</name>
</gene>
<accession>A8GPM5</accession>
<sequence>MIKLLYPKFWQKRNIIAYLLLPIGLIYKFLGYLRDSLARPIMLPAKVICVGNCSVGGTGKTQIVMYLAKLLRAKNVSFVIVTKAYGSNLKSATTIHPGHTALEVGDEGVILAKYGTVIATKNIKEILPLINELKPDIIIIDDFLQNPYFYKDFTIVSVDSQRLFGNGFLIPAGPLRQDPNKALDAADLIFLVSSTNDKIPNILTPYVNKVISAQIVPSNNIDKTKNYFAFSGIGNPERFFSTLKNYGLNITGYKIFPDHYNYLQEDLENLYSLAKEHNTTLITTRKDHIKFNDLNNNIVCLDVELSINNHDLLNEKIFKKAQIFN</sequence>
<feature type="chain" id="PRO_1000049902" description="Tetraacyldisaccharide 4'-kinase">
    <location>
        <begin position="1"/>
        <end position="325"/>
    </location>
</feature>
<feature type="binding site" evidence="1">
    <location>
        <begin position="54"/>
        <end position="61"/>
    </location>
    <ligand>
        <name>ATP</name>
        <dbReference type="ChEBI" id="CHEBI:30616"/>
    </ligand>
</feature>
<protein>
    <recommendedName>
        <fullName evidence="1">Tetraacyldisaccharide 4'-kinase</fullName>
        <ecNumber evidence="1">2.7.1.130</ecNumber>
    </recommendedName>
    <alternativeName>
        <fullName evidence="1">Lipid A 4'-kinase</fullName>
    </alternativeName>
</protein>
<proteinExistence type="inferred from homology"/>